<sequence>MHSSPSAGKQRVALVMQYLGTHFHGWQRQPNFSSIQEEVELAIAKVVGQPVTLHGAGRTDAGVHAAAQVAHFDDPVGQIPPHRWSKILNGHLPQDIIVRGSAAVDSHWHARFSALWRRYRYSIYTDQWPNLFADQFSWHYYRFPLQEKTIQAAMEPLLGKHHLAAFHRAGSARRHSWVEVQGVECYRRGPMVYLEIQANGFLYGMVRLLVGMLAEVGSGQRSLTDFNDIWVNQRRDLVKYAAPAKGLCLLRVGYENFPLPDSLWFDSQPLWQFTG</sequence>
<reference key="1">
    <citation type="journal article" date="1996" name="DNA Res.">
        <title>Sequence analysis of the genome of the unicellular cyanobacterium Synechocystis sp. strain PCC6803. II. Sequence determination of the entire genome and assignment of potential protein-coding regions.</title>
        <authorList>
            <person name="Kaneko T."/>
            <person name="Sato S."/>
            <person name="Kotani H."/>
            <person name="Tanaka A."/>
            <person name="Asamizu E."/>
            <person name="Nakamura Y."/>
            <person name="Miyajima N."/>
            <person name="Hirosawa M."/>
            <person name="Sugiura M."/>
            <person name="Sasamoto S."/>
            <person name="Kimura T."/>
            <person name="Hosouchi T."/>
            <person name="Matsuno A."/>
            <person name="Muraki A."/>
            <person name="Nakazaki N."/>
            <person name="Naruo K."/>
            <person name="Okumura S."/>
            <person name="Shimpo S."/>
            <person name="Takeuchi C."/>
            <person name="Wada T."/>
            <person name="Watanabe A."/>
            <person name="Yamada M."/>
            <person name="Yasuda M."/>
            <person name="Tabata S."/>
        </authorList>
    </citation>
    <scope>NUCLEOTIDE SEQUENCE [LARGE SCALE GENOMIC DNA]</scope>
    <source>
        <strain>ATCC 27184 / PCC 6803 / Kazusa</strain>
    </source>
</reference>
<gene>
    <name evidence="1" type="primary">truA</name>
    <name type="ordered locus">sll1820</name>
</gene>
<dbReference type="EC" id="5.4.99.12" evidence="1"/>
<dbReference type="EMBL" id="BA000022">
    <property type="protein sequence ID" value="BAA17323.1"/>
    <property type="molecule type" value="Genomic_DNA"/>
</dbReference>
<dbReference type="PIR" id="S77476">
    <property type="entry name" value="S77476"/>
</dbReference>
<dbReference type="SMR" id="P73295"/>
<dbReference type="FunCoup" id="P73295">
    <property type="interactions" value="476"/>
</dbReference>
<dbReference type="STRING" id="1148.gene:10498186"/>
<dbReference type="PaxDb" id="1148-1652401"/>
<dbReference type="EnsemblBacteria" id="BAA17323">
    <property type="protein sequence ID" value="BAA17323"/>
    <property type="gene ID" value="BAA17323"/>
</dbReference>
<dbReference type="KEGG" id="syn:sll1820"/>
<dbReference type="eggNOG" id="COG0101">
    <property type="taxonomic scope" value="Bacteria"/>
</dbReference>
<dbReference type="InParanoid" id="P73295"/>
<dbReference type="PhylomeDB" id="P73295"/>
<dbReference type="Proteomes" id="UP000001425">
    <property type="component" value="Chromosome"/>
</dbReference>
<dbReference type="GO" id="GO:0009982">
    <property type="term" value="F:pseudouridine synthase activity"/>
    <property type="evidence" value="ECO:0000318"/>
    <property type="project" value="GO_Central"/>
</dbReference>
<dbReference type="GO" id="GO:0003723">
    <property type="term" value="F:RNA binding"/>
    <property type="evidence" value="ECO:0007669"/>
    <property type="project" value="InterPro"/>
</dbReference>
<dbReference type="GO" id="GO:0160147">
    <property type="term" value="F:tRNA pseudouridine(38-40) synthase activity"/>
    <property type="evidence" value="ECO:0007669"/>
    <property type="project" value="UniProtKB-EC"/>
</dbReference>
<dbReference type="GO" id="GO:0031119">
    <property type="term" value="P:tRNA pseudouridine synthesis"/>
    <property type="evidence" value="ECO:0000318"/>
    <property type="project" value="GO_Central"/>
</dbReference>
<dbReference type="CDD" id="cd02570">
    <property type="entry name" value="PseudoU_synth_EcTruA"/>
    <property type="match status" value="1"/>
</dbReference>
<dbReference type="FunFam" id="3.30.70.580:FF:000001">
    <property type="entry name" value="tRNA pseudouridine synthase A"/>
    <property type="match status" value="1"/>
</dbReference>
<dbReference type="FunFam" id="3.30.70.660:FF:000042">
    <property type="entry name" value="tRNA pseudouridine synthase A"/>
    <property type="match status" value="1"/>
</dbReference>
<dbReference type="Gene3D" id="3.30.70.660">
    <property type="entry name" value="Pseudouridine synthase I, catalytic domain, C-terminal subdomain"/>
    <property type="match status" value="1"/>
</dbReference>
<dbReference type="Gene3D" id="3.30.70.580">
    <property type="entry name" value="Pseudouridine synthase I, catalytic domain, N-terminal subdomain"/>
    <property type="match status" value="1"/>
</dbReference>
<dbReference type="HAMAP" id="MF_00171">
    <property type="entry name" value="TruA"/>
    <property type="match status" value="1"/>
</dbReference>
<dbReference type="InterPro" id="IPR020103">
    <property type="entry name" value="PsdUridine_synth_cat_dom_sf"/>
</dbReference>
<dbReference type="InterPro" id="IPR001406">
    <property type="entry name" value="PsdUridine_synth_TruA"/>
</dbReference>
<dbReference type="InterPro" id="IPR020097">
    <property type="entry name" value="PsdUridine_synth_TruA_a/b_dom"/>
</dbReference>
<dbReference type="InterPro" id="IPR020095">
    <property type="entry name" value="PsdUridine_synth_TruA_C"/>
</dbReference>
<dbReference type="InterPro" id="IPR020094">
    <property type="entry name" value="TruA/RsuA/RluB/E/F_N"/>
</dbReference>
<dbReference type="NCBIfam" id="TIGR00071">
    <property type="entry name" value="hisT_truA"/>
    <property type="match status" value="1"/>
</dbReference>
<dbReference type="PANTHER" id="PTHR11142">
    <property type="entry name" value="PSEUDOURIDYLATE SYNTHASE"/>
    <property type="match status" value="1"/>
</dbReference>
<dbReference type="PANTHER" id="PTHR11142:SF0">
    <property type="entry name" value="TRNA PSEUDOURIDINE SYNTHASE-LIKE 1"/>
    <property type="match status" value="1"/>
</dbReference>
<dbReference type="Pfam" id="PF01416">
    <property type="entry name" value="PseudoU_synth_1"/>
    <property type="match status" value="2"/>
</dbReference>
<dbReference type="PIRSF" id="PIRSF001430">
    <property type="entry name" value="tRNA_psdUrid_synth"/>
    <property type="match status" value="1"/>
</dbReference>
<dbReference type="SUPFAM" id="SSF55120">
    <property type="entry name" value="Pseudouridine synthase"/>
    <property type="match status" value="1"/>
</dbReference>
<name>TRUA_SYNY3</name>
<protein>
    <recommendedName>
        <fullName evidence="1">tRNA pseudouridine synthase A</fullName>
        <ecNumber evidence="1">5.4.99.12</ecNumber>
    </recommendedName>
    <alternativeName>
        <fullName evidence="1">tRNA pseudouridine(38-40) synthase</fullName>
    </alternativeName>
    <alternativeName>
        <fullName evidence="1">tRNA pseudouridylate synthase I</fullName>
    </alternativeName>
    <alternativeName>
        <fullName evidence="1">tRNA-uridine isomerase I</fullName>
    </alternativeName>
</protein>
<organism>
    <name type="scientific">Synechocystis sp. (strain ATCC 27184 / PCC 6803 / Kazusa)</name>
    <dbReference type="NCBI Taxonomy" id="1111708"/>
    <lineage>
        <taxon>Bacteria</taxon>
        <taxon>Bacillati</taxon>
        <taxon>Cyanobacteriota</taxon>
        <taxon>Cyanophyceae</taxon>
        <taxon>Synechococcales</taxon>
        <taxon>Merismopediaceae</taxon>
        <taxon>Synechocystis</taxon>
    </lineage>
</organism>
<keyword id="KW-0413">Isomerase</keyword>
<keyword id="KW-1185">Reference proteome</keyword>
<keyword id="KW-0819">tRNA processing</keyword>
<comment type="function">
    <text evidence="1">Formation of pseudouridine at positions 38, 39 and 40 in the anticodon stem and loop of transfer RNAs.</text>
</comment>
<comment type="catalytic activity">
    <reaction evidence="1">
        <text>uridine(38/39/40) in tRNA = pseudouridine(38/39/40) in tRNA</text>
        <dbReference type="Rhea" id="RHEA:22376"/>
        <dbReference type="Rhea" id="RHEA-COMP:10085"/>
        <dbReference type="Rhea" id="RHEA-COMP:10087"/>
        <dbReference type="ChEBI" id="CHEBI:65314"/>
        <dbReference type="ChEBI" id="CHEBI:65315"/>
        <dbReference type="EC" id="5.4.99.12"/>
    </reaction>
</comment>
<comment type="subunit">
    <text evidence="1">Homodimer.</text>
</comment>
<comment type="similarity">
    <text evidence="1">Belongs to the tRNA pseudouridine synthase TruA family.</text>
</comment>
<evidence type="ECO:0000255" key="1">
    <source>
        <dbReference type="HAMAP-Rule" id="MF_00171"/>
    </source>
</evidence>
<feature type="chain" id="PRO_0000057473" description="tRNA pseudouridine synthase A">
    <location>
        <begin position="1"/>
        <end position="275"/>
    </location>
</feature>
<feature type="active site" description="Nucleophile" evidence="1">
    <location>
        <position position="60"/>
    </location>
</feature>
<feature type="binding site" evidence="1">
    <location>
        <position position="119"/>
    </location>
    <ligand>
        <name>substrate</name>
    </ligand>
</feature>
<accession>P73295</accession>
<proteinExistence type="inferred from homology"/>